<feature type="chain" id="PRO_0000303788" description="Exodeoxyribonuclease 7 large subunit">
    <location>
        <begin position="1"/>
        <end position="448"/>
    </location>
</feature>
<keyword id="KW-0963">Cytoplasm</keyword>
<keyword id="KW-0269">Exonuclease</keyword>
<keyword id="KW-0378">Hydrolase</keyword>
<keyword id="KW-0540">Nuclease</keyword>
<keyword id="KW-1185">Reference proteome</keyword>
<reference key="1">
    <citation type="journal article" date="2004" name="Extremophiles">
        <title>Genomic characterization of thermophilic Geobacillus species isolated from the deepest sea mud of the Mariana Trench.</title>
        <authorList>
            <person name="Takami H."/>
            <person name="Nishi S."/>
            <person name="Lu J."/>
            <person name="Shimamura S."/>
            <person name="Takaki Y."/>
        </authorList>
    </citation>
    <scope>NUCLEOTIDE SEQUENCE [GENOMIC DNA]</scope>
    <source>
        <strain>HTA426</strain>
    </source>
</reference>
<reference key="2">
    <citation type="journal article" date="2004" name="Nucleic Acids Res.">
        <title>Thermoadaptation trait revealed by the genome sequence of thermophilic Geobacillus kaustophilus.</title>
        <authorList>
            <person name="Takami H."/>
            <person name="Takaki Y."/>
            <person name="Chee G.-J."/>
            <person name="Nishi S."/>
            <person name="Shimamura S."/>
            <person name="Suzuki H."/>
            <person name="Matsui S."/>
            <person name="Uchiyama I."/>
        </authorList>
    </citation>
    <scope>NUCLEOTIDE SEQUENCE [LARGE SCALE GENOMIC DNA]</scope>
    <source>
        <strain>HTA426</strain>
    </source>
</reference>
<comment type="function">
    <text evidence="1">Bidirectionally degrades single-stranded DNA into large acid-insoluble oligonucleotides, which are then degraded further into small acid-soluble oligonucleotides.</text>
</comment>
<comment type="catalytic activity">
    <reaction evidence="1">
        <text>Exonucleolytic cleavage in either 5'- to 3'- or 3'- to 5'-direction to yield nucleoside 5'-phosphates.</text>
        <dbReference type="EC" id="3.1.11.6"/>
    </reaction>
</comment>
<comment type="subunit">
    <text evidence="1">Heterooligomer composed of large and small subunits.</text>
</comment>
<comment type="subcellular location">
    <subcellularLocation>
        <location evidence="1">Cytoplasm</location>
    </subcellularLocation>
</comment>
<comment type="similarity">
    <text evidence="1">Belongs to the XseA family.</text>
</comment>
<organism>
    <name type="scientific">Geobacillus kaustophilus (strain HTA426)</name>
    <dbReference type="NCBI Taxonomy" id="235909"/>
    <lineage>
        <taxon>Bacteria</taxon>
        <taxon>Bacillati</taxon>
        <taxon>Bacillota</taxon>
        <taxon>Bacilli</taxon>
        <taxon>Bacillales</taxon>
        <taxon>Anoxybacillaceae</taxon>
        <taxon>Geobacillus</taxon>
        <taxon>Geobacillus thermoleovorans group</taxon>
    </lineage>
</organism>
<sequence>MEVKYVTVGALTKYIKRKFDVDPHLRDLWVKGEISNFKQHSRGHMYFTLKDSQGRIAAVMFAGYNQHLPFRPEDGMNVLARGEISVYEPNGNYQLYVKEMQPEGVGSLYLAYEQLKQRLEAEGLFSPVHKKPLPAFPRCIGVVTSPTGAAVRDIMTTIRRRYPLAKVILFPALVQGDGAAPSIVRAIERANSFGGVDVLIVGRGGGSIEELWAFNEEIVARAIFASKIPIISAVGHETDFTIADFVADLRAPTPTAAAEMAAPHVGELAERLAERKWRLIRAMKEQLAADKEQLRRLQGSYAFRYPKRLYEQKEQQLDALLERLSRQRERLVDKHRQRLHELDMRLWRHHPAAELERMKERQKAAANALEKAMRTAVERHRFRFRSNLARLEALSPLRIMERGYSLVYNEQGELVKRTNQLRIGEHLSIQVQDGRVDCQVTGVEEKHV</sequence>
<evidence type="ECO:0000255" key="1">
    <source>
        <dbReference type="HAMAP-Rule" id="MF_00378"/>
    </source>
</evidence>
<proteinExistence type="inferred from homology"/>
<accession>Q75TC0</accession>
<accession>Q5KXA6</accession>
<dbReference type="EC" id="3.1.11.6" evidence="1"/>
<dbReference type="EMBL" id="AB126620">
    <property type="protein sequence ID" value="BAD18358.1"/>
    <property type="molecule type" value="Genomic_DNA"/>
</dbReference>
<dbReference type="EMBL" id="BA000043">
    <property type="protein sequence ID" value="BAD76680.1"/>
    <property type="molecule type" value="Genomic_DNA"/>
</dbReference>
<dbReference type="RefSeq" id="WP_011231877.1">
    <property type="nucleotide sequence ID" value="NC_006510.1"/>
</dbReference>
<dbReference type="SMR" id="Q75TC0"/>
<dbReference type="STRING" id="235909.GK2395"/>
<dbReference type="KEGG" id="gka:GK2395"/>
<dbReference type="eggNOG" id="COG1570">
    <property type="taxonomic scope" value="Bacteria"/>
</dbReference>
<dbReference type="HOGENOM" id="CLU_023625_3_1_9"/>
<dbReference type="Proteomes" id="UP000001172">
    <property type="component" value="Chromosome"/>
</dbReference>
<dbReference type="GO" id="GO:0005737">
    <property type="term" value="C:cytoplasm"/>
    <property type="evidence" value="ECO:0007669"/>
    <property type="project" value="UniProtKB-SubCell"/>
</dbReference>
<dbReference type="GO" id="GO:0009318">
    <property type="term" value="C:exodeoxyribonuclease VII complex"/>
    <property type="evidence" value="ECO:0007669"/>
    <property type="project" value="InterPro"/>
</dbReference>
<dbReference type="GO" id="GO:0008855">
    <property type="term" value="F:exodeoxyribonuclease VII activity"/>
    <property type="evidence" value="ECO:0007669"/>
    <property type="project" value="UniProtKB-UniRule"/>
</dbReference>
<dbReference type="GO" id="GO:0003676">
    <property type="term" value="F:nucleic acid binding"/>
    <property type="evidence" value="ECO:0007669"/>
    <property type="project" value="InterPro"/>
</dbReference>
<dbReference type="GO" id="GO:0006308">
    <property type="term" value="P:DNA catabolic process"/>
    <property type="evidence" value="ECO:0007669"/>
    <property type="project" value="UniProtKB-UniRule"/>
</dbReference>
<dbReference type="CDD" id="cd04489">
    <property type="entry name" value="ExoVII_LU_OBF"/>
    <property type="match status" value="1"/>
</dbReference>
<dbReference type="HAMAP" id="MF_00378">
    <property type="entry name" value="Exonuc_7_L"/>
    <property type="match status" value="1"/>
</dbReference>
<dbReference type="InterPro" id="IPR003753">
    <property type="entry name" value="Exonuc_VII_L"/>
</dbReference>
<dbReference type="InterPro" id="IPR020579">
    <property type="entry name" value="Exonuc_VII_lsu_C"/>
</dbReference>
<dbReference type="InterPro" id="IPR025824">
    <property type="entry name" value="OB-fold_nuc-bd_dom"/>
</dbReference>
<dbReference type="NCBIfam" id="TIGR00237">
    <property type="entry name" value="xseA"/>
    <property type="match status" value="1"/>
</dbReference>
<dbReference type="PANTHER" id="PTHR30008">
    <property type="entry name" value="EXODEOXYRIBONUCLEASE 7 LARGE SUBUNIT"/>
    <property type="match status" value="1"/>
</dbReference>
<dbReference type="PANTHER" id="PTHR30008:SF0">
    <property type="entry name" value="EXODEOXYRIBONUCLEASE 7 LARGE SUBUNIT"/>
    <property type="match status" value="1"/>
</dbReference>
<dbReference type="Pfam" id="PF02601">
    <property type="entry name" value="Exonuc_VII_L"/>
    <property type="match status" value="1"/>
</dbReference>
<dbReference type="Pfam" id="PF13742">
    <property type="entry name" value="tRNA_anti_2"/>
    <property type="match status" value="1"/>
</dbReference>
<protein>
    <recommendedName>
        <fullName evidence="1">Exodeoxyribonuclease 7 large subunit</fullName>
        <ecNumber evidence="1">3.1.11.6</ecNumber>
    </recommendedName>
    <alternativeName>
        <fullName evidence="1">Exodeoxyribonuclease VII large subunit</fullName>
        <shortName evidence="1">Exonuclease VII large subunit</shortName>
    </alternativeName>
</protein>
<name>EX7L_GEOKA</name>
<gene>
    <name evidence="1" type="primary">xseA</name>
    <name type="ordered locus">GK2395</name>
    <name type="ORF">GKC02</name>
</gene>